<accession>Q59RR0</accession>
<accession>A0A1D8PTH9</accession>
<protein>
    <recommendedName>
        <fullName>Cell wall transcription factor ACE2</fullName>
    </recommendedName>
</protein>
<keyword id="KW-0130">Cell adhesion</keyword>
<keyword id="KW-0961">Cell wall biogenesis/degradation</keyword>
<keyword id="KW-0479">Metal-binding</keyword>
<keyword id="KW-0539">Nucleus</keyword>
<keyword id="KW-1185">Reference proteome</keyword>
<keyword id="KW-0677">Repeat</keyword>
<keyword id="KW-0804">Transcription</keyword>
<keyword id="KW-0805">Transcription regulation</keyword>
<keyword id="KW-0843">Virulence</keyword>
<keyword id="KW-0862">Zinc</keyword>
<keyword id="KW-0863">Zinc-finger</keyword>
<proteinExistence type="predicted"/>
<dbReference type="EMBL" id="CP017630">
    <property type="protein sequence ID" value="AOW31437.1"/>
    <property type="molecule type" value="Genomic_DNA"/>
</dbReference>
<dbReference type="RefSeq" id="XP_712331.2">
    <property type="nucleotide sequence ID" value="XM_707238.2"/>
</dbReference>
<dbReference type="SMR" id="Q59RR0"/>
<dbReference type="BioGRID" id="1229088">
    <property type="interactions" value="10"/>
</dbReference>
<dbReference type="FunCoup" id="Q59RR0">
    <property type="interactions" value="835"/>
</dbReference>
<dbReference type="STRING" id="237561.Q59RR0"/>
<dbReference type="EnsemblFungi" id="CR_07440W_A-T">
    <property type="protein sequence ID" value="CR_07440W_A-T-p1"/>
    <property type="gene ID" value="CR_07440W_A"/>
</dbReference>
<dbReference type="GeneID" id="3646034"/>
<dbReference type="KEGG" id="cal:CAALFM_CR07440WA"/>
<dbReference type="CGD" id="CAL0000191878">
    <property type="gene designation" value="ACE2"/>
</dbReference>
<dbReference type="VEuPathDB" id="FungiDB:CR_07440W_A"/>
<dbReference type="eggNOG" id="KOG1721">
    <property type="taxonomic scope" value="Eukaryota"/>
</dbReference>
<dbReference type="HOGENOM" id="CLU_022817_0_0_1"/>
<dbReference type="InParanoid" id="Q59RR0"/>
<dbReference type="OrthoDB" id="3437960at2759"/>
<dbReference type="PHI-base" id="PHI:331"/>
<dbReference type="PRO" id="PR:Q59RR0"/>
<dbReference type="Proteomes" id="UP000000559">
    <property type="component" value="Chromosome R"/>
</dbReference>
<dbReference type="GO" id="GO:0005634">
    <property type="term" value="C:nucleus"/>
    <property type="evidence" value="ECO:0000314"/>
    <property type="project" value="CGD"/>
</dbReference>
<dbReference type="GO" id="GO:0000981">
    <property type="term" value="F:DNA-binding transcription factor activity, RNA polymerase II-specific"/>
    <property type="evidence" value="ECO:0000318"/>
    <property type="project" value="GO_Central"/>
</dbReference>
<dbReference type="GO" id="GO:0000978">
    <property type="term" value="F:RNA polymerase II cis-regulatory region sequence-specific DNA binding"/>
    <property type="evidence" value="ECO:0000318"/>
    <property type="project" value="GO_Central"/>
</dbReference>
<dbReference type="GO" id="GO:0008270">
    <property type="term" value="F:zinc ion binding"/>
    <property type="evidence" value="ECO:0007669"/>
    <property type="project" value="UniProtKB-KW"/>
</dbReference>
<dbReference type="GO" id="GO:0043709">
    <property type="term" value="P:cell adhesion involved in single-species biofilm formation"/>
    <property type="evidence" value="ECO:0000315"/>
    <property type="project" value="CGD"/>
</dbReference>
<dbReference type="GO" id="GO:0030447">
    <property type="term" value="P:filamentous growth"/>
    <property type="evidence" value="ECO:0000315"/>
    <property type="project" value="CGD"/>
</dbReference>
<dbReference type="GO" id="GO:0044182">
    <property type="term" value="P:filamentous growth of a population of unicellular organisms"/>
    <property type="evidence" value="ECO:0000315"/>
    <property type="project" value="CGD"/>
</dbReference>
<dbReference type="GO" id="GO:0036171">
    <property type="term" value="P:filamentous growth of a population of unicellular organisms in response to chemical stimulus"/>
    <property type="evidence" value="ECO:0000315"/>
    <property type="project" value="CGD"/>
</dbReference>
<dbReference type="GO" id="GO:0031505">
    <property type="term" value="P:fungal-type cell wall organization"/>
    <property type="evidence" value="ECO:0000315"/>
    <property type="project" value="CGD"/>
</dbReference>
<dbReference type="GO" id="GO:1900189">
    <property type="term" value="P:positive regulation of cell adhesion involved in single-species biofilm formation"/>
    <property type="evidence" value="ECO:0000315"/>
    <property type="project" value="CGD"/>
</dbReference>
<dbReference type="GO" id="GO:0010811">
    <property type="term" value="P:positive regulation of cell-substrate adhesion"/>
    <property type="evidence" value="ECO:0000315"/>
    <property type="project" value="CGD"/>
</dbReference>
<dbReference type="GO" id="GO:1900439">
    <property type="term" value="P:positive regulation of filamentous growth of a population of unicellular organisms in response to chemical stimulus"/>
    <property type="evidence" value="ECO:0000315"/>
    <property type="project" value="CGD"/>
</dbReference>
<dbReference type="GO" id="GO:0045944">
    <property type="term" value="P:positive regulation of transcription by RNA polymerase II"/>
    <property type="evidence" value="ECO:0000315"/>
    <property type="project" value="CGD"/>
</dbReference>
<dbReference type="GO" id="GO:0032955">
    <property type="term" value="P:regulation of division septum assembly"/>
    <property type="evidence" value="ECO:0000315"/>
    <property type="project" value="CGD"/>
</dbReference>
<dbReference type="GO" id="GO:0006357">
    <property type="term" value="P:regulation of transcription by RNA polymerase II"/>
    <property type="evidence" value="ECO:0000318"/>
    <property type="project" value="GO_Central"/>
</dbReference>
<dbReference type="FunFam" id="3.30.160.60:FF:001752">
    <property type="entry name" value="Transcriptional factor SWI5"/>
    <property type="match status" value="1"/>
</dbReference>
<dbReference type="Gene3D" id="3.30.160.60">
    <property type="entry name" value="Classic Zinc Finger"/>
    <property type="match status" value="2"/>
</dbReference>
<dbReference type="InterPro" id="IPR036236">
    <property type="entry name" value="Znf_C2H2_sf"/>
</dbReference>
<dbReference type="InterPro" id="IPR013087">
    <property type="entry name" value="Znf_C2H2_type"/>
</dbReference>
<dbReference type="PANTHER" id="PTHR14003">
    <property type="entry name" value="TRANSCRIPTIONAL REPRESSOR PROTEIN YY"/>
    <property type="match status" value="1"/>
</dbReference>
<dbReference type="PANTHER" id="PTHR14003:SF19">
    <property type="entry name" value="YY2 TRANSCRIPTION FACTOR"/>
    <property type="match status" value="1"/>
</dbReference>
<dbReference type="Pfam" id="PF00096">
    <property type="entry name" value="zf-C2H2"/>
    <property type="match status" value="2"/>
</dbReference>
<dbReference type="SMART" id="SM00355">
    <property type="entry name" value="ZnF_C2H2"/>
    <property type="match status" value="2"/>
</dbReference>
<dbReference type="SUPFAM" id="SSF57667">
    <property type="entry name" value="beta-beta-alpha zinc fingers"/>
    <property type="match status" value="1"/>
</dbReference>
<dbReference type="PROSITE" id="PS00028">
    <property type="entry name" value="ZINC_FINGER_C2H2_1"/>
    <property type="match status" value="2"/>
</dbReference>
<dbReference type="PROSITE" id="PS50157">
    <property type="entry name" value="ZINC_FINGER_C2H2_2"/>
    <property type="match status" value="2"/>
</dbReference>
<name>ACE2_CANAL</name>
<organism>
    <name type="scientific">Candida albicans (strain SC5314 / ATCC MYA-2876)</name>
    <name type="common">Yeast</name>
    <dbReference type="NCBI Taxonomy" id="237561"/>
    <lineage>
        <taxon>Eukaryota</taxon>
        <taxon>Fungi</taxon>
        <taxon>Dikarya</taxon>
        <taxon>Ascomycota</taxon>
        <taxon>Saccharomycotina</taxon>
        <taxon>Pichiomycetes</taxon>
        <taxon>Debaryomycetaceae</taxon>
        <taxon>Candida/Lodderomyces clade</taxon>
        <taxon>Candida</taxon>
    </lineage>
</organism>
<evidence type="ECO:0000255" key="1">
    <source>
        <dbReference type="PROSITE-ProRule" id="PRU00042"/>
    </source>
</evidence>
<evidence type="ECO:0000256" key="2">
    <source>
        <dbReference type="SAM" id="MobiDB-lite"/>
    </source>
</evidence>
<evidence type="ECO:0000269" key="3">
    <source>
    </source>
</evidence>
<evidence type="ECO:0000269" key="4">
    <source>
    </source>
</evidence>
<evidence type="ECO:0000269" key="5">
    <source>
    </source>
</evidence>
<evidence type="ECO:0000269" key="6">
    <source>
    </source>
</evidence>
<evidence type="ECO:0000269" key="7">
    <source>
    </source>
</evidence>
<evidence type="ECO:0000269" key="8">
    <source>
    </source>
</evidence>
<evidence type="ECO:0000269" key="9">
    <source>
    </source>
</evidence>
<reference key="1">
    <citation type="journal article" date="2004" name="Proc. Natl. Acad. Sci. U.S.A.">
        <title>The diploid genome sequence of Candida albicans.</title>
        <authorList>
            <person name="Jones T."/>
            <person name="Federspiel N.A."/>
            <person name="Chibana H."/>
            <person name="Dungan J."/>
            <person name="Kalman S."/>
            <person name="Magee B.B."/>
            <person name="Newport G."/>
            <person name="Thorstenson Y.R."/>
            <person name="Agabian N."/>
            <person name="Magee P.T."/>
            <person name="Davis R.W."/>
            <person name="Scherer S."/>
        </authorList>
    </citation>
    <scope>NUCLEOTIDE SEQUENCE [LARGE SCALE GENOMIC DNA]</scope>
    <source>
        <strain>SC5314 / ATCC MYA-2876</strain>
    </source>
</reference>
<reference key="2">
    <citation type="journal article" date="2007" name="Genome Biol.">
        <title>Assembly of the Candida albicans genome into sixteen supercontigs aligned on the eight chromosomes.</title>
        <authorList>
            <person name="van het Hoog M."/>
            <person name="Rast T.J."/>
            <person name="Martchenko M."/>
            <person name="Grindle S."/>
            <person name="Dignard D."/>
            <person name="Hogues H."/>
            <person name="Cuomo C."/>
            <person name="Berriman M."/>
            <person name="Scherer S."/>
            <person name="Magee B.B."/>
            <person name="Whiteway M."/>
            <person name="Chibana H."/>
            <person name="Nantel A."/>
            <person name="Magee P.T."/>
        </authorList>
    </citation>
    <scope>GENOME REANNOTATION</scope>
    <source>
        <strain>SC5314 / ATCC MYA-2876</strain>
    </source>
</reference>
<reference key="3">
    <citation type="journal article" date="2013" name="Genome Biol.">
        <title>Assembly of a phased diploid Candida albicans genome facilitates allele-specific measurements and provides a simple model for repeat and indel structure.</title>
        <authorList>
            <person name="Muzzey D."/>
            <person name="Schwartz K."/>
            <person name="Weissman J.S."/>
            <person name="Sherlock G."/>
        </authorList>
    </citation>
    <scope>NUCLEOTIDE SEQUENCE [LARGE SCALE GENOMIC DNA]</scope>
    <scope>GENOME REANNOTATION</scope>
    <source>
        <strain>SC5314 / ATCC MYA-2876</strain>
    </source>
</reference>
<reference key="4">
    <citation type="journal article" date="2004" name="Mol. Microbiol.">
        <title>The Candida albicans CaACE2 gene affects morphogenesis, adherence and virulence.</title>
        <authorList>
            <person name="Kelly M.T."/>
            <person name="MacCallum D.M."/>
            <person name="Clancy S.D."/>
            <person name="Odds F.C."/>
            <person name="Brown A.J."/>
            <person name="Butler G."/>
        </authorList>
    </citation>
    <scope>FUNCTION</scope>
    <scope>SUBCELLULAR LOCATION</scope>
</reference>
<reference key="5">
    <citation type="journal article" date="2006" name="Eukaryot. Cell">
        <title>Candida albicans transcription factor Ace2 regulates metabolism and is required for filamentation in hypoxic conditions.</title>
        <authorList>
            <person name="Mulhern S.M."/>
            <person name="Logue M.E."/>
            <person name="Butler G."/>
        </authorList>
    </citation>
    <scope>FUNCTION</scope>
</reference>
<reference key="6">
    <citation type="journal article" date="2008" name="Mol. Biol. Cell">
        <title>Role of the RAM network in cell polarity and hyphal morphogenesis in Candida albicans.</title>
        <authorList>
            <person name="Song Y."/>
            <person name="Cheon S.A."/>
            <person name="Lee K.E."/>
            <person name="Lee S.Y."/>
            <person name="Lee B.K."/>
            <person name="Oh D.B."/>
            <person name="Kang H.A."/>
            <person name="Kim J.Y."/>
        </authorList>
    </citation>
    <scope>FUNCTION</scope>
</reference>
<reference key="7">
    <citation type="journal article" date="2009" name="Mol. Cell. Biol.">
        <title>Hyphal chain formation in Candida albicans: Cdc28-Hgc1 phosphorylation of Efg1 represses cell separation genes.</title>
        <authorList>
            <person name="Wang A."/>
            <person name="Raniga P.P."/>
            <person name="Lane S."/>
            <person name="Lu Y."/>
            <person name="Liu H."/>
        </authorList>
    </citation>
    <scope>SUBCELLULAR LOCATION</scope>
</reference>
<reference key="8">
    <citation type="journal article" date="2011" name="Eukaryot. Cell">
        <title>Sch9 kinase integrates hypoxia and CO2 sensing to suppress hyphal morphogenesis in Candida albicans.</title>
        <authorList>
            <person name="Stichternoth C."/>
            <person name="Fraund A."/>
            <person name="Setiadi E."/>
            <person name="Giasson L."/>
            <person name="Vecchiarelli A."/>
            <person name="Ernst J.F."/>
        </authorList>
    </citation>
    <scope>FUNCTION</scope>
</reference>
<reference key="9">
    <citation type="journal article" date="2012" name="PLoS Pathog.">
        <title>Portrait of Candida albicans adherence regulators.</title>
        <authorList>
            <person name="Finkel J.S."/>
            <person name="Xu W."/>
            <person name="Huang D."/>
            <person name="Hill E.M."/>
            <person name="Desai J.V."/>
            <person name="Woolford C.A."/>
            <person name="Nett J.E."/>
            <person name="Taff H."/>
            <person name="Norice C.T."/>
            <person name="Andes D.R."/>
            <person name="Lanni F."/>
            <person name="Mitchell A.P."/>
        </authorList>
    </citation>
    <scope>FUNCTION</scope>
</reference>
<reference key="10">
    <citation type="journal article" date="2013" name="Eukaryot. Cell">
        <title>Surface stress induces a conserved cell wall stress response in the pathogenic fungus Candida albicans.</title>
        <authorList>
            <person name="Heilmann C.J."/>
            <person name="Sorgo A.G."/>
            <person name="Mohammadi S."/>
            <person name="Sosinska G.J."/>
            <person name="de Koster C.G."/>
            <person name="Brul S."/>
            <person name="de Koning L.J."/>
            <person name="Klis F.M."/>
        </authorList>
    </citation>
    <scope>FUNCTION</scope>
</reference>
<comment type="function">
    <text evidence="3 4 5 7 8 9">Transcription factor involved in the RAM (regulation of ACE2 transcription factor and polarized morphogenesis) signaling network that regulates polarized morphogenesis. Regulates expression of genes involved in cell separation such as CHT3, DSE1, and SCW11; or other cell wall genes such as ASH1, DSE4, PIR1, PRY2, and RME1. Required for regulation of morphogenesis, cell separation, adherence, biofilm formation, invasion, as well as virulence in a mouse model of infection.</text>
</comment>
<comment type="subcellular location">
    <subcellularLocation>
        <location evidence="3 6">Nucleus</location>
    </subcellularLocation>
    <text>Localized in the nuclei of daughter cells.</text>
</comment>
<sequence>MHWKFSNFRKYHLSFHLNLFDLSLFFISFYCFPILYICFFNQVHSFRSTQPSLIMNKFDLFDDYSTKGSTIPLPNENFDQLFLSSEANDMEFLFNETLMGLQDLDVPSGYGIPQNTINNDFQHTPNKSKSHSRQYSGTAIFGFADHNKDLSINGVNNDLCKQSNKAINTQSVSPGELLKRSRGSQTPTPTSALPDTAQDILDFNFEEKPILLLEEDELEEEKHKQQQRMMTQSSPLKRVTTPSQSPFVQQPQTMKQRKPHKKTNEYIVANENPNSYKFPPSPSPTAKRQQYPPSSPIPYNPKSDSVGGNSYSAKYLQSLNKTQQIEYVDDIEPLLQEDNNNMKYIPIPVQEPMSYQKQKPVTPPLQSQNDSQQLEPLKTPQPQPKQQQQQQQPNNEQDKEFTANFNFNTFLPPPTPPNLINGSPDWNSSPEPHSPSPGRLQPPQQISPIHQNLGAMGNNINFYTPMYYELPVQAEQPQPQPQPHQQQHQQQQHQPELQNTYQQIKHIQQQQQMLQHQFHNQNNQLRQQHPNQFQNQNQNQNQNQTKTPYSQQSQFSPTHSNFNLSPAKQLNSNVGSMHLSPLKKQLPNTPTKQPPVTIEWSPVISPNSKQPLHKQIKESSPRRRIKKTSLLPPGELDNYWTGPDEDKIYTCTYKNCGKKFTRRYNVRSHIQTHLSDRPFGCQFCPKRFVRQHDLNRHVKGHIEARYSKCPCGKEFARLDALRKHQDRNICVGGNKNVISKPTKKKGTNNTQQQLLKTDTVVERIEKQLLQEDKSVTEEFLMLQ</sequence>
<feature type="chain" id="PRO_0000422792" description="Cell wall transcription factor ACE2">
    <location>
        <begin position="1"/>
        <end position="783"/>
    </location>
</feature>
<feature type="zinc finger region" description="C2H2-type 1" evidence="1">
    <location>
        <begin position="649"/>
        <end position="673"/>
    </location>
</feature>
<feature type="zinc finger region" description="C2H2-type 2" evidence="1">
    <location>
        <begin position="679"/>
        <end position="701"/>
    </location>
</feature>
<feature type="region of interest" description="Disordered" evidence="2">
    <location>
        <begin position="166"/>
        <end position="195"/>
    </location>
</feature>
<feature type="region of interest" description="Disordered" evidence="2">
    <location>
        <begin position="219"/>
        <end position="311"/>
    </location>
</feature>
<feature type="region of interest" description="Disordered" evidence="2">
    <location>
        <begin position="355"/>
        <end position="452"/>
    </location>
</feature>
<feature type="region of interest" description="Disordered" evidence="2">
    <location>
        <begin position="474"/>
        <end position="497"/>
    </location>
</feature>
<feature type="region of interest" description="Disordered" evidence="2">
    <location>
        <begin position="535"/>
        <end position="624"/>
    </location>
</feature>
<feature type="compositionally biased region" description="Polar residues" evidence="2">
    <location>
        <begin position="183"/>
        <end position="193"/>
    </location>
</feature>
<feature type="compositionally biased region" description="Polar residues" evidence="2">
    <location>
        <begin position="227"/>
        <end position="254"/>
    </location>
</feature>
<feature type="compositionally biased region" description="Polar residues" evidence="2">
    <location>
        <begin position="302"/>
        <end position="311"/>
    </location>
</feature>
<feature type="compositionally biased region" description="Polar residues" evidence="2">
    <location>
        <begin position="355"/>
        <end position="371"/>
    </location>
</feature>
<feature type="compositionally biased region" description="Low complexity" evidence="2">
    <location>
        <begin position="372"/>
        <end position="395"/>
    </location>
</feature>
<feature type="compositionally biased region" description="Polar residues" evidence="2">
    <location>
        <begin position="420"/>
        <end position="431"/>
    </location>
</feature>
<feature type="compositionally biased region" description="Low complexity" evidence="2">
    <location>
        <begin position="483"/>
        <end position="497"/>
    </location>
</feature>
<feature type="compositionally biased region" description="Low complexity" evidence="2">
    <location>
        <begin position="535"/>
        <end position="544"/>
    </location>
</feature>
<feature type="compositionally biased region" description="Polar residues" evidence="2">
    <location>
        <begin position="545"/>
        <end position="575"/>
    </location>
</feature>
<gene>
    <name type="primary">ACE2</name>
    <name type="ordered locus">CAALFM_CR07440WA</name>
    <name type="ORF">CaO19.13543</name>
    <name type="ORF">CaO19.6124</name>
</gene>